<sequence>MEMILNNTEARVLGCLIEKEMTTPEYYPLSLNALANACNQKSNRNPVMGMDETVVAAALDGLRFKQLAVLAADGGRVAKYRHLLAEKLGLLPPELAVVCELLLRGPQTLGELRTRAERMHPFADLAGVEAVLRELMERGEPLVTRLARQAGRKEARYAHLLGGDIQGDAEERMFDAEGPCTEMTGGDDRIARLEEQVTSLREEVAMLRRVVDDFKGQFE</sequence>
<dbReference type="EMBL" id="CP000482">
    <property type="protein sequence ID" value="ABL00501.1"/>
    <property type="molecule type" value="Genomic_DNA"/>
</dbReference>
<dbReference type="RefSeq" id="WP_011736736.1">
    <property type="nucleotide sequence ID" value="NC_008609.1"/>
</dbReference>
<dbReference type="SMR" id="A1AT30"/>
<dbReference type="STRING" id="338966.Ppro_2903"/>
<dbReference type="KEGG" id="ppd:Ppro_2903"/>
<dbReference type="eggNOG" id="COG3132">
    <property type="taxonomic scope" value="Bacteria"/>
</dbReference>
<dbReference type="HOGENOM" id="CLU_057831_1_0_7"/>
<dbReference type="OrthoDB" id="9784785at2"/>
<dbReference type="Proteomes" id="UP000006732">
    <property type="component" value="Chromosome"/>
</dbReference>
<dbReference type="Gene3D" id="1.10.10.10">
    <property type="entry name" value="Winged helix-like DNA-binding domain superfamily/Winged helix DNA-binding domain"/>
    <property type="match status" value="2"/>
</dbReference>
<dbReference type="HAMAP" id="MF_01584">
    <property type="entry name" value="UPF0502"/>
    <property type="match status" value="1"/>
</dbReference>
<dbReference type="InterPro" id="IPR007432">
    <property type="entry name" value="DUF480"/>
</dbReference>
<dbReference type="InterPro" id="IPR036388">
    <property type="entry name" value="WH-like_DNA-bd_sf"/>
</dbReference>
<dbReference type="InterPro" id="IPR036390">
    <property type="entry name" value="WH_DNA-bd_sf"/>
</dbReference>
<dbReference type="PANTHER" id="PTHR38768">
    <property type="entry name" value="UPF0502 PROTEIN YCEH"/>
    <property type="match status" value="1"/>
</dbReference>
<dbReference type="PANTHER" id="PTHR38768:SF1">
    <property type="entry name" value="UPF0502 PROTEIN YCEH"/>
    <property type="match status" value="1"/>
</dbReference>
<dbReference type="Pfam" id="PF04337">
    <property type="entry name" value="DUF480"/>
    <property type="match status" value="1"/>
</dbReference>
<dbReference type="SUPFAM" id="SSF46785">
    <property type="entry name" value="Winged helix' DNA-binding domain"/>
    <property type="match status" value="2"/>
</dbReference>
<keyword id="KW-1185">Reference proteome</keyword>
<name>Y2903_PELPD</name>
<organism>
    <name type="scientific">Pelobacter propionicus (strain DSM 2379 / NBRC 103807 / OttBd1)</name>
    <dbReference type="NCBI Taxonomy" id="338966"/>
    <lineage>
        <taxon>Bacteria</taxon>
        <taxon>Pseudomonadati</taxon>
        <taxon>Thermodesulfobacteriota</taxon>
        <taxon>Desulfuromonadia</taxon>
        <taxon>Desulfuromonadales</taxon>
        <taxon>Desulfuromonadaceae</taxon>
        <taxon>Pelobacter</taxon>
    </lineage>
</organism>
<accession>A1AT30</accession>
<proteinExistence type="inferred from homology"/>
<evidence type="ECO:0000255" key="1">
    <source>
        <dbReference type="HAMAP-Rule" id="MF_01584"/>
    </source>
</evidence>
<protein>
    <recommendedName>
        <fullName evidence="1">UPF0502 protein Ppro_2903</fullName>
    </recommendedName>
</protein>
<gene>
    <name type="ordered locus">Ppro_2903</name>
</gene>
<comment type="similarity">
    <text evidence="1">Belongs to the UPF0502 family.</text>
</comment>
<reference key="1">
    <citation type="submission" date="2006-10" db="EMBL/GenBank/DDBJ databases">
        <title>Complete sequence of chromosome of Pelobacter propionicus DSM 2379.</title>
        <authorList>
            <consortium name="US DOE Joint Genome Institute"/>
            <person name="Copeland A."/>
            <person name="Lucas S."/>
            <person name="Lapidus A."/>
            <person name="Barry K."/>
            <person name="Detter J.C."/>
            <person name="Glavina del Rio T."/>
            <person name="Hammon N."/>
            <person name="Israni S."/>
            <person name="Dalin E."/>
            <person name="Tice H."/>
            <person name="Pitluck S."/>
            <person name="Saunders E."/>
            <person name="Brettin T."/>
            <person name="Bruce D."/>
            <person name="Han C."/>
            <person name="Tapia R."/>
            <person name="Schmutz J."/>
            <person name="Larimer F."/>
            <person name="Land M."/>
            <person name="Hauser L."/>
            <person name="Kyrpides N."/>
            <person name="Kim E."/>
            <person name="Lovley D."/>
            <person name="Richardson P."/>
        </authorList>
    </citation>
    <scope>NUCLEOTIDE SEQUENCE [LARGE SCALE GENOMIC DNA]</scope>
    <source>
        <strain>DSM 2379 / NBRC 103807 / OttBd1</strain>
    </source>
</reference>
<feature type="chain" id="PRO_0000309396" description="UPF0502 protein Ppro_2903">
    <location>
        <begin position="1"/>
        <end position="219"/>
    </location>
</feature>